<reference key="1">
    <citation type="submission" date="2008-06" db="EMBL/GenBank/DDBJ databases">
        <title>Complete sequence of chromosome of Prosthecochloris aestuarii DSM 271.</title>
        <authorList>
            <consortium name="US DOE Joint Genome Institute"/>
            <person name="Lucas S."/>
            <person name="Copeland A."/>
            <person name="Lapidus A."/>
            <person name="Glavina del Rio T."/>
            <person name="Dalin E."/>
            <person name="Tice H."/>
            <person name="Bruce D."/>
            <person name="Goodwin L."/>
            <person name="Pitluck S."/>
            <person name="Schmutz J."/>
            <person name="Larimer F."/>
            <person name="Land M."/>
            <person name="Hauser L."/>
            <person name="Kyrpides N."/>
            <person name="Anderson I."/>
            <person name="Liu Z."/>
            <person name="Li T."/>
            <person name="Zhao F."/>
            <person name="Overmann J."/>
            <person name="Bryant D.A."/>
            <person name="Richardson P."/>
        </authorList>
    </citation>
    <scope>NUCLEOTIDE SEQUENCE [LARGE SCALE GENOMIC DNA]</scope>
    <source>
        <strain>DSM 271 / SK 413</strain>
    </source>
</reference>
<feature type="chain" id="PRO_1000096673" description="DNA mismatch repair protein MutL">
    <location>
        <begin position="1"/>
        <end position="622"/>
    </location>
</feature>
<accession>B4S3X8</accession>
<evidence type="ECO:0000255" key="1">
    <source>
        <dbReference type="HAMAP-Rule" id="MF_00149"/>
    </source>
</evidence>
<proteinExistence type="inferred from homology"/>
<gene>
    <name evidence="1" type="primary">mutL</name>
    <name type="ordered locus">Paes_0267</name>
</gene>
<name>MUTL_PROA2</name>
<keyword id="KW-0227">DNA damage</keyword>
<keyword id="KW-0234">DNA repair</keyword>
<organism>
    <name type="scientific">Prosthecochloris aestuarii (strain DSM 271 / SK 413)</name>
    <dbReference type="NCBI Taxonomy" id="290512"/>
    <lineage>
        <taxon>Bacteria</taxon>
        <taxon>Pseudomonadati</taxon>
        <taxon>Chlorobiota</taxon>
        <taxon>Chlorobiia</taxon>
        <taxon>Chlorobiales</taxon>
        <taxon>Chlorobiaceae</taxon>
        <taxon>Prosthecochloris</taxon>
    </lineage>
</organism>
<protein>
    <recommendedName>
        <fullName evidence="1">DNA mismatch repair protein MutL</fullName>
    </recommendedName>
</protein>
<dbReference type="EMBL" id="CP001108">
    <property type="protein sequence ID" value="ACF45324.1"/>
    <property type="molecule type" value="Genomic_DNA"/>
</dbReference>
<dbReference type="RefSeq" id="WP_012504861.1">
    <property type="nucleotide sequence ID" value="NC_011059.1"/>
</dbReference>
<dbReference type="SMR" id="B4S3X8"/>
<dbReference type="STRING" id="290512.Paes_0267"/>
<dbReference type="KEGG" id="paa:Paes_0267"/>
<dbReference type="eggNOG" id="COG0323">
    <property type="taxonomic scope" value="Bacteria"/>
</dbReference>
<dbReference type="HOGENOM" id="CLU_004131_4_2_10"/>
<dbReference type="Proteomes" id="UP000002725">
    <property type="component" value="Chromosome"/>
</dbReference>
<dbReference type="GO" id="GO:0032300">
    <property type="term" value="C:mismatch repair complex"/>
    <property type="evidence" value="ECO:0007669"/>
    <property type="project" value="InterPro"/>
</dbReference>
<dbReference type="GO" id="GO:0005524">
    <property type="term" value="F:ATP binding"/>
    <property type="evidence" value="ECO:0007669"/>
    <property type="project" value="InterPro"/>
</dbReference>
<dbReference type="GO" id="GO:0016887">
    <property type="term" value="F:ATP hydrolysis activity"/>
    <property type="evidence" value="ECO:0007669"/>
    <property type="project" value="InterPro"/>
</dbReference>
<dbReference type="GO" id="GO:0140664">
    <property type="term" value="F:ATP-dependent DNA damage sensor activity"/>
    <property type="evidence" value="ECO:0007669"/>
    <property type="project" value="InterPro"/>
</dbReference>
<dbReference type="GO" id="GO:0030983">
    <property type="term" value="F:mismatched DNA binding"/>
    <property type="evidence" value="ECO:0007669"/>
    <property type="project" value="InterPro"/>
</dbReference>
<dbReference type="GO" id="GO:0006298">
    <property type="term" value="P:mismatch repair"/>
    <property type="evidence" value="ECO:0007669"/>
    <property type="project" value="UniProtKB-UniRule"/>
</dbReference>
<dbReference type="CDD" id="cd16926">
    <property type="entry name" value="HATPase_MutL-MLH-PMS-like"/>
    <property type="match status" value="1"/>
</dbReference>
<dbReference type="CDD" id="cd00782">
    <property type="entry name" value="MutL_Trans"/>
    <property type="match status" value="1"/>
</dbReference>
<dbReference type="FunFam" id="3.30.565.10:FF:000003">
    <property type="entry name" value="DNA mismatch repair endonuclease MutL"/>
    <property type="match status" value="1"/>
</dbReference>
<dbReference type="Gene3D" id="3.30.230.10">
    <property type="match status" value="1"/>
</dbReference>
<dbReference type="Gene3D" id="3.30.565.10">
    <property type="entry name" value="Histidine kinase-like ATPase, C-terminal domain"/>
    <property type="match status" value="1"/>
</dbReference>
<dbReference type="Gene3D" id="3.30.1540.20">
    <property type="entry name" value="MutL, C-terminal domain, dimerisation subdomain"/>
    <property type="match status" value="1"/>
</dbReference>
<dbReference type="Gene3D" id="3.30.1370.100">
    <property type="entry name" value="MutL, C-terminal domain, regulatory subdomain"/>
    <property type="match status" value="1"/>
</dbReference>
<dbReference type="HAMAP" id="MF_00149">
    <property type="entry name" value="DNA_mis_repair"/>
    <property type="match status" value="1"/>
</dbReference>
<dbReference type="InterPro" id="IPR014762">
    <property type="entry name" value="DNA_mismatch_repair_CS"/>
</dbReference>
<dbReference type="InterPro" id="IPR020667">
    <property type="entry name" value="DNA_mismatch_repair_MutL"/>
</dbReference>
<dbReference type="InterPro" id="IPR013507">
    <property type="entry name" value="DNA_mismatch_S5_2-like"/>
</dbReference>
<dbReference type="InterPro" id="IPR036890">
    <property type="entry name" value="HATPase_C_sf"/>
</dbReference>
<dbReference type="InterPro" id="IPR002099">
    <property type="entry name" value="MutL/Mlh/PMS"/>
</dbReference>
<dbReference type="InterPro" id="IPR038973">
    <property type="entry name" value="MutL/Mlh/Pms-like"/>
</dbReference>
<dbReference type="InterPro" id="IPR014790">
    <property type="entry name" value="MutL_C"/>
</dbReference>
<dbReference type="InterPro" id="IPR042120">
    <property type="entry name" value="MutL_C_dimsub"/>
</dbReference>
<dbReference type="InterPro" id="IPR042121">
    <property type="entry name" value="MutL_C_regsub"/>
</dbReference>
<dbReference type="InterPro" id="IPR037198">
    <property type="entry name" value="MutL_C_sf"/>
</dbReference>
<dbReference type="InterPro" id="IPR020568">
    <property type="entry name" value="Ribosomal_Su5_D2-typ_SF"/>
</dbReference>
<dbReference type="InterPro" id="IPR014721">
    <property type="entry name" value="Ribsml_uS5_D2-typ_fold_subgr"/>
</dbReference>
<dbReference type="NCBIfam" id="TIGR00585">
    <property type="entry name" value="mutl"/>
    <property type="match status" value="1"/>
</dbReference>
<dbReference type="PANTHER" id="PTHR10073">
    <property type="entry name" value="DNA MISMATCH REPAIR PROTEIN MLH, PMS, MUTL"/>
    <property type="match status" value="1"/>
</dbReference>
<dbReference type="PANTHER" id="PTHR10073:SF12">
    <property type="entry name" value="DNA MISMATCH REPAIR PROTEIN MLH1"/>
    <property type="match status" value="1"/>
</dbReference>
<dbReference type="Pfam" id="PF01119">
    <property type="entry name" value="DNA_mis_repair"/>
    <property type="match status" value="1"/>
</dbReference>
<dbReference type="Pfam" id="PF13589">
    <property type="entry name" value="HATPase_c_3"/>
    <property type="match status" value="1"/>
</dbReference>
<dbReference type="Pfam" id="PF08676">
    <property type="entry name" value="MutL_C"/>
    <property type="match status" value="1"/>
</dbReference>
<dbReference type="SMART" id="SM01340">
    <property type="entry name" value="DNA_mis_repair"/>
    <property type="match status" value="1"/>
</dbReference>
<dbReference type="SMART" id="SM00853">
    <property type="entry name" value="MutL_C"/>
    <property type="match status" value="1"/>
</dbReference>
<dbReference type="SUPFAM" id="SSF55874">
    <property type="entry name" value="ATPase domain of HSP90 chaperone/DNA topoisomerase II/histidine kinase"/>
    <property type="match status" value="1"/>
</dbReference>
<dbReference type="SUPFAM" id="SSF118116">
    <property type="entry name" value="DNA mismatch repair protein MutL"/>
    <property type="match status" value="1"/>
</dbReference>
<dbReference type="SUPFAM" id="SSF54211">
    <property type="entry name" value="Ribosomal protein S5 domain 2-like"/>
    <property type="match status" value="1"/>
</dbReference>
<dbReference type="PROSITE" id="PS00058">
    <property type="entry name" value="DNA_MISMATCH_REPAIR_1"/>
    <property type="match status" value="1"/>
</dbReference>
<sequence length="622" mass="70798">MPRITKLPESVANKISAGEVVQRPASVVKELIENAIDAGAGRIVLSIKDAGKQLVQIIDNGHGMSEPDALMCVERFATSKISSAEELETLGTLGFRGEALASISSVSHFELKSCSEGMDAAFLHRYEGGELVEKSKAAADRGTTISVRNLFFNVPARRKFLKTNATEFKHIFETVKAQALAYPEIQWQLFNDDEELFHFRSSDMHERLNFFFGEEFADSLIEIREENDFLSLYGYVGKPGMLKRQKNDQLFYINRRVIQNRMLSQALQQAYGELLVERQTPFALLFLGLDTRQVDINVHPAKLEVKFEDERNIRNMVYPIVKRAVQLQDFAPDVGIAGLLERQMTQDAMNPENSLRKLEYKRAAGPSSTTDDLYRSYLSELPPVSSPPPGSIGEQGEMFSDLLAPSRDRELKPSVYDRSALLQSDENRPDPAGSDSKIWQLHNKYIVCQIKTGLMVIDQHVAHERVLYERAVEIMNNNVPNSQQLLFPQKIELKSWEYEIFQEIRDDLCRLGFNLRSFGNRTVMIEGIAQDVRNGTEAVILQNMIDEYQQNALKLKLEKRENLAKSYSCRNAIMSGQKLSLEEMRSLIDRLFATRMPYVCPHGRPVIIKISLDQLDRMFGRK</sequence>
<comment type="function">
    <text evidence="1">This protein is involved in the repair of mismatches in DNA. It is required for dam-dependent methyl-directed DNA mismatch repair. May act as a 'molecular matchmaker', a protein that promotes the formation of a stable complex between two or more DNA-binding proteins in an ATP-dependent manner without itself being part of a final effector complex.</text>
</comment>
<comment type="similarity">
    <text evidence="1">Belongs to the DNA mismatch repair MutL/HexB family.</text>
</comment>